<evidence type="ECO:0000250" key="1">
    <source>
        <dbReference type="UniProtKB" id="P68137"/>
    </source>
</evidence>
<evidence type="ECO:0000305" key="2"/>
<name>ACT3_PEA</name>
<proteinExistence type="evidence at transcript level"/>
<comment type="function">
    <text>Actins are highly conserved proteins that are involved in various types of cell motility and are ubiquitously expressed in all eukaryotic cells.</text>
</comment>
<comment type="catalytic activity">
    <reaction evidence="1">
        <text>ATP + H2O = ADP + phosphate + H(+)</text>
        <dbReference type="Rhea" id="RHEA:13065"/>
        <dbReference type="ChEBI" id="CHEBI:15377"/>
        <dbReference type="ChEBI" id="CHEBI:15378"/>
        <dbReference type="ChEBI" id="CHEBI:30616"/>
        <dbReference type="ChEBI" id="CHEBI:43474"/>
        <dbReference type="ChEBI" id="CHEBI:456216"/>
    </reaction>
</comment>
<comment type="subcellular location">
    <subcellularLocation>
        <location>Cytoplasm</location>
        <location>Cytoskeleton</location>
    </subcellularLocation>
</comment>
<comment type="similarity">
    <text evidence="2">Belongs to the actin family.</text>
</comment>
<keyword id="KW-0067">ATP-binding</keyword>
<keyword id="KW-0963">Cytoplasm</keyword>
<keyword id="KW-0206">Cytoskeleton</keyword>
<keyword id="KW-0378">Hydrolase</keyword>
<keyword id="KW-0547">Nucleotide-binding</keyword>
<dbReference type="EC" id="3.6.4.-" evidence="1"/>
<dbReference type="EMBL" id="X90378">
    <property type="protein sequence ID" value="CAA62028.1"/>
    <property type="molecule type" value="mRNA"/>
</dbReference>
<dbReference type="PIR" id="S58316">
    <property type="entry name" value="S58316"/>
</dbReference>
<dbReference type="SMR" id="P46258"/>
<dbReference type="GO" id="GO:0005737">
    <property type="term" value="C:cytoplasm"/>
    <property type="evidence" value="ECO:0007669"/>
    <property type="project" value="UniProtKB-KW"/>
</dbReference>
<dbReference type="GO" id="GO:0005856">
    <property type="term" value="C:cytoskeleton"/>
    <property type="evidence" value="ECO:0007669"/>
    <property type="project" value="UniProtKB-SubCell"/>
</dbReference>
<dbReference type="GO" id="GO:0005524">
    <property type="term" value="F:ATP binding"/>
    <property type="evidence" value="ECO:0007669"/>
    <property type="project" value="UniProtKB-KW"/>
</dbReference>
<dbReference type="GO" id="GO:0016787">
    <property type="term" value="F:hydrolase activity"/>
    <property type="evidence" value="ECO:0007669"/>
    <property type="project" value="UniProtKB-KW"/>
</dbReference>
<dbReference type="CDD" id="cd10224">
    <property type="entry name" value="ASKHA_NBD_actin"/>
    <property type="match status" value="1"/>
</dbReference>
<dbReference type="FunFam" id="3.30.420.40:FF:000291">
    <property type="entry name" value="Actin, alpha skeletal muscle"/>
    <property type="match status" value="1"/>
</dbReference>
<dbReference type="FunFam" id="3.90.640.10:FF:000001">
    <property type="entry name" value="Actin, muscle"/>
    <property type="match status" value="1"/>
</dbReference>
<dbReference type="FunFam" id="3.30.420.40:FF:000404">
    <property type="entry name" value="Major actin"/>
    <property type="match status" value="1"/>
</dbReference>
<dbReference type="FunFam" id="3.30.420.40:FF:000058">
    <property type="entry name" value="Putative actin-related protein 5"/>
    <property type="match status" value="1"/>
</dbReference>
<dbReference type="Gene3D" id="3.30.420.40">
    <property type="match status" value="2"/>
</dbReference>
<dbReference type="Gene3D" id="3.90.640.10">
    <property type="entry name" value="Actin, Chain A, domain 4"/>
    <property type="match status" value="1"/>
</dbReference>
<dbReference type="InterPro" id="IPR004000">
    <property type="entry name" value="Actin"/>
</dbReference>
<dbReference type="InterPro" id="IPR020902">
    <property type="entry name" value="Actin/actin-like_CS"/>
</dbReference>
<dbReference type="InterPro" id="IPR004001">
    <property type="entry name" value="Actin_CS"/>
</dbReference>
<dbReference type="InterPro" id="IPR043129">
    <property type="entry name" value="ATPase_NBD"/>
</dbReference>
<dbReference type="PANTHER" id="PTHR11937">
    <property type="entry name" value="ACTIN"/>
    <property type="match status" value="1"/>
</dbReference>
<dbReference type="Pfam" id="PF00022">
    <property type="entry name" value="Actin"/>
    <property type="match status" value="1"/>
</dbReference>
<dbReference type="PRINTS" id="PR00190">
    <property type="entry name" value="ACTIN"/>
</dbReference>
<dbReference type="SMART" id="SM00268">
    <property type="entry name" value="ACTIN"/>
    <property type="match status" value="1"/>
</dbReference>
<dbReference type="SUPFAM" id="SSF53067">
    <property type="entry name" value="Actin-like ATPase domain"/>
    <property type="match status" value="2"/>
</dbReference>
<dbReference type="PROSITE" id="PS00406">
    <property type="entry name" value="ACTINS_1"/>
    <property type="match status" value="1"/>
</dbReference>
<dbReference type="PROSITE" id="PS00432">
    <property type="entry name" value="ACTINS_2"/>
    <property type="match status" value="1"/>
</dbReference>
<dbReference type="PROSITE" id="PS01132">
    <property type="entry name" value="ACTINS_ACT_LIKE"/>
    <property type="match status" value="1"/>
</dbReference>
<accession>P46258</accession>
<organism>
    <name type="scientific">Pisum sativum</name>
    <name type="common">Garden pea</name>
    <name type="synonym">Lathyrus oleraceus</name>
    <dbReference type="NCBI Taxonomy" id="3888"/>
    <lineage>
        <taxon>Eukaryota</taxon>
        <taxon>Viridiplantae</taxon>
        <taxon>Streptophyta</taxon>
        <taxon>Embryophyta</taxon>
        <taxon>Tracheophyta</taxon>
        <taxon>Spermatophyta</taxon>
        <taxon>Magnoliopsida</taxon>
        <taxon>eudicotyledons</taxon>
        <taxon>Gunneridae</taxon>
        <taxon>Pentapetalae</taxon>
        <taxon>rosids</taxon>
        <taxon>fabids</taxon>
        <taxon>Fabales</taxon>
        <taxon>Fabaceae</taxon>
        <taxon>Papilionoideae</taxon>
        <taxon>50 kb inversion clade</taxon>
        <taxon>NPAAA clade</taxon>
        <taxon>Hologalegina</taxon>
        <taxon>IRL clade</taxon>
        <taxon>Fabeae</taxon>
        <taxon>Pisum</taxon>
    </lineage>
</organism>
<protein>
    <recommendedName>
        <fullName>Actin-3</fullName>
        <ecNumber evidence="1">3.6.4.-</ecNumber>
    </recommendedName>
</protein>
<sequence length="377" mass="41635">MAEAEDIQPLVCDNGTGMVKAGFAGDDAPRAVFPSIVGRPRHTGVMVGMGQKDAYVGDEAQSKRGILTLKYPIEHGIVSNWDDMEKIWHHTFYNELRVAPEEHPVLLTEAPLNPKANREKMTQIMFETFNTPAMYVAIQAVLSLYASGRTTGIVLDSGDGVSHTVPIYEGYALPHAILRLDLAGRDLTDGLMKILTERGYTFTTSAEREIVRDMKEKLAYIALDYEQELETAKTSSAVEKTYELPDGQVITIGAERFRCPEVTVQPSMIGMESPGIHETTFNSIMKCDVDIRKDLYGNIVLSGGSTMFPGIADRMSKEITALAPSSMKIKVVAPPERKYSVWIGGSILASLSTFQQMWIAKAEYDESGPSIVHRKCF</sequence>
<feature type="chain" id="PRO_0000088982" description="Actin-3">
    <location>
        <begin position="1"/>
        <end position="377"/>
    </location>
</feature>
<reference key="1">
    <citation type="submission" date="1995-07" db="EMBL/GenBank/DDBJ databases">
        <authorList>
            <person name="Cao X.F."/>
            <person name="Xia M."/>
            <person name="Wang R.C."/>
            <person name="Chen Z.L."/>
            <person name="Yen L.F."/>
        </authorList>
    </citation>
    <scope>NUCLEOTIDE SEQUENCE [MRNA]</scope>
    <source>
        <tissue>Tendril</tissue>
    </source>
</reference>